<proteinExistence type="inferred from homology"/>
<gene>
    <name type="ordered locus">MK1237</name>
</gene>
<protein>
    <recommendedName>
        <fullName evidence="1">RNA-free ribonuclease P</fullName>
        <shortName evidence="1">RNA-free RNase P</shortName>
        <ecNumber evidence="1">3.1.26.5</ecNumber>
    </recommendedName>
    <alternativeName>
        <fullName evidence="1">Protein-only RNase P</fullName>
    </alternativeName>
</protein>
<accession>Q8TW01</accession>
<comment type="function">
    <text evidence="1">RNA-free RNase P that catalyzes the removal of the 5'-leader sequence from pre-tRNA to produce the mature 5'-terminus.</text>
</comment>
<comment type="catalytic activity">
    <reaction evidence="1">
        <text>Endonucleolytic cleavage of RNA, removing 5'-extranucleotides from tRNA precursor.</text>
        <dbReference type="EC" id="3.1.26.5"/>
    </reaction>
</comment>
<comment type="similarity">
    <text evidence="1">Belongs to the HARP family.</text>
</comment>
<feature type="chain" id="PRO_0000136080" description="RNA-free ribonuclease P">
    <location>
        <begin position="1"/>
        <end position="228"/>
    </location>
</feature>
<evidence type="ECO:0000255" key="1">
    <source>
        <dbReference type="HAMAP-Rule" id="MF_01078"/>
    </source>
</evidence>
<keyword id="KW-0255">Endonuclease</keyword>
<keyword id="KW-0378">Hydrolase</keyword>
<keyword id="KW-0540">Nuclease</keyword>
<keyword id="KW-1185">Reference proteome</keyword>
<keyword id="KW-0819">tRNA processing</keyword>
<organism>
    <name type="scientific">Methanopyrus kandleri (strain AV19 / DSM 6324 / JCM 9639 / NBRC 100938)</name>
    <dbReference type="NCBI Taxonomy" id="190192"/>
    <lineage>
        <taxon>Archaea</taxon>
        <taxon>Methanobacteriati</taxon>
        <taxon>Methanobacteriota</taxon>
        <taxon>Methanomada group</taxon>
        <taxon>Methanopyri</taxon>
        <taxon>Methanopyrales</taxon>
        <taxon>Methanopyraceae</taxon>
        <taxon>Methanopyrus</taxon>
    </lineage>
</organism>
<sequence>MTVYKQRFVLDTTAFTDRGVVDELGDGDLCEAVTRLLDLIGRARMELAISCYIPYPTVYRELKGFLERNGCPELLSRIDTWIVKKTPNRYEVKVPARLFMAYVKDMRERLDRGRKRAEKAIWEAALEAYEIMLREEADVPKERIIREVIGETVRRFRRKYRQTVRHGTLDSAPDLDVLLLAKELDAAVVASDEGIERWARELGLRFMPACSFPDMIEEYLRMSREVEG</sequence>
<dbReference type="EC" id="3.1.26.5" evidence="1"/>
<dbReference type="EMBL" id="AE009439">
    <property type="protein sequence ID" value="AAM02450.1"/>
    <property type="molecule type" value="Genomic_DNA"/>
</dbReference>
<dbReference type="SMR" id="Q8TW01"/>
<dbReference type="STRING" id="190192.MK1237"/>
<dbReference type="PaxDb" id="190192-MK1237"/>
<dbReference type="EnsemblBacteria" id="AAM02450">
    <property type="protein sequence ID" value="AAM02450"/>
    <property type="gene ID" value="MK1237"/>
</dbReference>
<dbReference type="KEGG" id="mka:MK1237"/>
<dbReference type="PATRIC" id="fig|190192.8.peg.1341"/>
<dbReference type="HOGENOM" id="CLU_109672_0_0_2"/>
<dbReference type="InParanoid" id="Q8TW01"/>
<dbReference type="Proteomes" id="UP000001826">
    <property type="component" value="Chromosome"/>
</dbReference>
<dbReference type="GO" id="GO:0004526">
    <property type="term" value="F:ribonuclease P activity"/>
    <property type="evidence" value="ECO:0007669"/>
    <property type="project" value="UniProtKB-UniRule"/>
</dbReference>
<dbReference type="GO" id="GO:0001682">
    <property type="term" value="P:tRNA 5'-leader removal"/>
    <property type="evidence" value="ECO:0007669"/>
    <property type="project" value="UniProtKB-UniRule"/>
</dbReference>
<dbReference type="CDD" id="cd18691">
    <property type="entry name" value="PIN_VapC-like"/>
    <property type="match status" value="1"/>
</dbReference>
<dbReference type="HAMAP" id="MF_01078">
    <property type="entry name" value="RNA_free_RNase_P"/>
    <property type="match status" value="1"/>
</dbReference>
<dbReference type="InterPro" id="IPR014856">
    <property type="entry name" value="RNA_free_RNase_P"/>
</dbReference>
<dbReference type="NCBIfam" id="NF003343">
    <property type="entry name" value="PRK04358.1-4"/>
    <property type="match status" value="1"/>
</dbReference>
<dbReference type="NCBIfam" id="TIGR03875">
    <property type="entry name" value="RNA_lig_partner"/>
    <property type="match status" value="1"/>
</dbReference>
<dbReference type="PANTHER" id="PTHR41173:SF1">
    <property type="entry name" value="RNA-FREE RIBONUCLEASE P"/>
    <property type="match status" value="1"/>
</dbReference>
<dbReference type="PANTHER" id="PTHR41173">
    <property type="entry name" value="UPF0278 PROTEIN TK1425"/>
    <property type="match status" value="1"/>
</dbReference>
<dbReference type="Pfam" id="PF08745">
    <property type="entry name" value="PIN_5"/>
    <property type="match status" value="1"/>
</dbReference>
<name>RFRNP_METKA</name>
<reference key="1">
    <citation type="journal article" date="2002" name="Proc. Natl. Acad. Sci. U.S.A.">
        <title>The complete genome of hyperthermophile Methanopyrus kandleri AV19 and monophyly of archaeal methanogens.</title>
        <authorList>
            <person name="Slesarev A.I."/>
            <person name="Mezhevaya K.V."/>
            <person name="Makarova K.S."/>
            <person name="Polushin N.N."/>
            <person name="Shcherbinina O.V."/>
            <person name="Shakhova V.V."/>
            <person name="Belova G.I."/>
            <person name="Aravind L."/>
            <person name="Natale D.A."/>
            <person name="Rogozin I.B."/>
            <person name="Tatusov R.L."/>
            <person name="Wolf Y.I."/>
            <person name="Stetter K.O."/>
            <person name="Malykh A.G."/>
            <person name="Koonin E.V."/>
            <person name="Kozyavkin S.A."/>
        </authorList>
    </citation>
    <scope>NUCLEOTIDE SEQUENCE [LARGE SCALE GENOMIC DNA]</scope>
    <source>
        <strain>AV19 / DSM 6324 / JCM 9639 / NBRC 100938</strain>
    </source>
</reference>